<protein>
    <recommendedName>
        <fullName>UDP-glycosyltransferase 71D2</fullName>
        <ecNumber>2.4.1.-</ecNumber>
    </recommendedName>
</protein>
<feature type="chain" id="PRO_0000409059" description="UDP-glycosyltransferase 71D2">
    <location>
        <begin position="1"/>
        <end position="467"/>
    </location>
</feature>
<feature type="binding site" evidence="1">
    <location>
        <position position="283"/>
    </location>
    <ligand>
        <name>UDP-alpha-D-glucose</name>
        <dbReference type="ChEBI" id="CHEBI:58885"/>
    </ligand>
</feature>
<feature type="binding site" evidence="1">
    <location>
        <begin position="339"/>
        <end position="341"/>
    </location>
    <ligand>
        <name>UDP-alpha-D-glucose</name>
        <dbReference type="ChEBI" id="CHEBI:58885"/>
    </ligand>
</feature>
<feature type="binding site" evidence="1">
    <location>
        <begin position="356"/>
        <end position="364"/>
    </location>
    <ligand>
        <name>UDP-alpha-D-glucose</name>
        <dbReference type="ChEBI" id="CHEBI:58885"/>
    </ligand>
</feature>
<feature type="binding site" evidence="1">
    <location>
        <begin position="378"/>
        <end position="381"/>
    </location>
    <ligand>
        <name>UDP-alpha-D-glucose</name>
        <dbReference type="ChEBI" id="CHEBI:58885"/>
    </ligand>
</feature>
<feature type="sequence conflict" description="In Ref. 4; AAM63772." evidence="2" ref="4">
    <original>R</original>
    <variation>K</variation>
    <location>
        <position position="33"/>
    </location>
</feature>
<feature type="sequence conflict" description="In Ref. 4; AAM63772." evidence="2" ref="4">
    <original>G</original>
    <variation>E</variation>
    <location>
        <position position="232"/>
    </location>
</feature>
<sequence>MRNAELIFIPTPTVGHLVPFLEFARRLIEQDDRIRITFLLMKQQGQSHLDSYVKTISSSLPFVRFIDVPELEEKPTLGTQSVEAYVYDFIETNVPLVQNIIMGILSSPAFDGVTVKGFVADFFCLPMIDVAKDASLPFYVFLTSNSGFLAMMQYLAYGHKKDTSVFARNSEEMLSIPGFVNPVPAKVLPSALFIEDGYDADVKLAILFTKANGILVNTSFDIEPTSLNHFLGEENYPSVYAVGPIFNPKAHPHPDQDLACCDESMKWLDAQPEASVVFLCFGSMGSLRGPLVKEIAHGLELCQYRFLWSLRTEEVTNDDLLPEGFMDRVSGRGMICGWSPQVEILAHKAVGGFVSHCGWNSIVESLWFGVPIVTWPMYAEQQLNAFLMVKELKLAVELKLDYSVHSGEIVSANEIETAISCVMNKDNNVVRKRVMDISQMIQRATKNGGSSFAAIEKFIHDVIGTRT</sequence>
<gene>
    <name type="primary">UGT71D2</name>
    <name type="ordered locus">At2g29710</name>
    <name type="ORF">T27A16.19</name>
</gene>
<name>U71D2_ARATH</name>
<dbReference type="EC" id="2.4.1.-"/>
<dbReference type="EMBL" id="AC005496">
    <property type="protein sequence ID" value="AAC35240.1"/>
    <property type="molecule type" value="Genomic_DNA"/>
</dbReference>
<dbReference type="EMBL" id="CP002685">
    <property type="protein sequence ID" value="AEC08296.1"/>
    <property type="molecule type" value="Genomic_DNA"/>
</dbReference>
<dbReference type="EMBL" id="BT026362">
    <property type="protein sequence ID" value="ABH04469.1"/>
    <property type="molecule type" value="mRNA"/>
</dbReference>
<dbReference type="EMBL" id="AY086718">
    <property type="protein sequence ID" value="AAM63772.1"/>
    <property type="molecule type" value="mRNA"/>
</dbReference>
<dbReference type="PIR" id="F84699">
    <property type="entry name" value="F84699"/>
</dbReference>
<dbReference type="RefSeq" id="NP_180532.1">
    <property type="nucleotide sequence ID" value="NM_128525.2"/>
</dbReference>
<dbReference type="SMR" id="O82385"/>
<dbReference type="CAZy" id="GT1">
    <property type="family name" value="Glycosyltransferase Family 1"/>
</dbReference>
<dbReference type="GlyGen" id="O82385">
    <property type="glycosylation" value="1 site"/>
</dbReference>
<dbReference type="iPTMnet" id="O82385"/>
<dbReference type="PaxDb" id="3702-AT2G29710.1"/>
<dbReference type="ProteomicsDB" id="228521"/>
<dbReference type="DNASU" id="817521"/>
<dbReference type="EnsemblPlants" id="AT2G29710.1">
    <property type="protein sequence ID" value="AT2G29710.1"/>
    <property type="gene ID" value="AT2G29710"/>
</dbReference>
<dbReference type="GeneID" id="817521"/>
<dbReference type="Gramene" id="AT2G29710.1">
    <property type="protein sequence ID" value="AT2G29710.1"/>
    <property type="gene ID" value="AT2G29710"/>
</dbReference>
<dbReference type="KEGG" id="ath:AT2G29710"/>
<dbReference type="Araport" id="AT2G29710"/>
<dbReference type="TAIR" id="AT2G29710"/>
<dbReference type="eggNOG" id="KOG1192">
    <property type="taxonomic scope" value="Eukaryota"/>
</dbReference>
<dbReference type="HOGENOM" id="CLU_001724_3_2_1"/>
<dbReference type="InParanoid" id="O82385"/>
<dbReference type="OMA" id="HEQNGEV"/>
<dbReference type="PhylomeDB" id="O82385"/>
<dbReference type="BioCyc" id="ARA:AT2G29710-MONOMER"/>
<dbReference type="PRO" id="PR:O82385"/>
<dbReference type="Proteomes" id="UP000006548">
    <property type="component" value="Chromosome 2"/>
</dbReference>
<dbReference type="ExpressionAtlas" id="O82385">
    <property type="expression patterns" value="baseline and differential"/>
</dbReference>
<dbReference type="GO" id="GO:0035251">
    <property type="term" value="F:UDP-glucosyltransferase activity"/>
    <property type="evidence" value="ECO:0007669"/>
    <property type="project" value="InterPro"/>
</dbReference>
<dbReference type="CDD" id="cd03784">
    <property type="entry name" value="GT1_Gtf-like"/>
    <property type="match status" value="1"/>
</dbReference>
<dbReference type="FunFam" id="3.40.50.2000:FF:000056">
    <property type="entry name" value="Glycosyltransferase"/>
    <property type="match status" value="1"/>
</dbReference>
<dbReference type="FunFam" id="3.40.50.2000:FF:000080">
    <property type="entry name" value="Glycosyltransferase"/>
    <property type="match status" value="1"/>
</dbReference>
<dbReference type="Gene3D" id="3.40.50.2000">
    <property type="entry name" value="Glycogen Phosphorylase B"/>
    <property type="match status" value="2"/>
</dbReference>
<dbReference type="InterPro" id="IPR050481">
    <property type="entry name" value="UDP-glycosyltransf_plant"/>
</dbReference>
<dbReference type="InterPro" id="IPR002213">
    <property type="entry name" value="UDP_glucos_trans"/>
</dbReference>
<dbReference type="InterPro" id="IPR035595">
    <property type="entry name" value="UDP_glycos_trans_CS"/>
</dbReference>
<dbReference type="PANTHER" id="PTHR48048">
    <property type="entry name" value="GLYCOSYLTRANSFERASE"/>
    <property type="match status" value="1"/>
</dbReference>
<dbReference type="PANTHER" id="PTHR48048:SF45">
    <property type="entry name" value="GLYCOSYLTRANSFERASE"/>
    <property type="match status" value="1"/>
</dbReference>
<dbReference type="Pfam" id="PF00201">
    <property type="entry name" value="UDPGT"/>
    <property type="match status" value="1"/>
</dbReference>
<dbReference type="SUPFAM" id="SSF53756">
    <property type="entry name" value="UDP-Glycosyltransferase/glycogen phosphorylase"/>
    <property type="match status" value="1"/>
</dbReference>
<dbReference type="PROSITE" id="PS00375">
    <property type="entry name" value="UDPGT"/>
    <property type="match status" value="1"/>
</dbReference>
<keyword id="KW-0328">Glycosyltransferase</keyword>
<keyword id="KW-1185">Reference proteome</keyword>
<keyword id="KW-0808">Transferase</keyword>
<proteinExistence type="evidence at transcript level"/>
<comment type="similarity">
    <text evidence="2">Belongs to the UDP-glycosyltransferase family.</text>
</comment>
<organism>
    <name type="scientific">Arabidopsis thaliana</name>
    <name type="common">Mouse-ear cress</name>
    <dbReference type="NCBI Taxonomy" id="3702"/>
    <lineage>
        <taxon>Eukaryota</taxon>
        <taxon>Viridiplantae</taxon>
        <taxon>Streptophyta</taxon>
        <taxon>Embryophyta</taxon>
        <taxon>Tracheophyta</taxon>
        <taxon>Spermatophyta</taxon>
        <taxon>Magnoliopsida</taxon>
        <taxon>eudicotyledons</taxon>
        <taxon>Gunneridae</taxon>
        <taxon>Pentapetalae</taxon>
        <taxon>rosids</taxon>
        <taxon>malvids</taxon>
        <taxon>Brassicales</taxon>
        <taxon>Brassicaceae</taxon>
        <taxon>Camelineae</taxon>
        <taxon>Arabidopsis</taxon>
    </lineage>
</organism>
<evidence type="ECO:0000250" key="1"/>
<evidence type="ECO:0000305" key="2"/>
<accession>O82385</accession>
<accession>Q8LC96</accession>
<reference key="1">
    <citation type="journal article" date="1999" name="Nature">
        <title>Sequence and analysis of chromosome 2 of the plant Arabidopsis thaliana.</title>
        <authorList>
            <person name="Lin X."/>
            <person name="Kaul S."/>
            <person name="Rounsley S.D."/>
            <person name="Shea T.P."/>
            <person name="Benito M.-I."/>
            <person name="Town C.D."/>
            <person name="Fujii C.Y."/>
            <person name="Mason T.M."/>
            <person name="Bowman C.L."/>
            <person name="Barnstead M.E."/>
            <person name="Feldblyum T.V."/>
            <person name="Buell C.R."/>
            <person name="Ketchum K.A."/>
            <person name="Lee J.J."/>
            <person name="Ronning C.M."/>
            <person name="Koo H.L."/>
            <person name="Moffat K.S."/>
            <person name="Cronin L.A."/>
            <person name="Shen M."/>
            <person name="Pai G."/>
            <person name="Van Aken S."/>
            <person name="Umayam L."/>
            <person name="Tallon L.J."/>
            <person name="Gill J.E."/>
            <person name="Adams M.D."/>
            <person name="Carrera A.J."/>
            <person name="Creasy T.H."/>
            <person name="Goodman H.M."/>
            <person name="Somerville C.R."/>
            <person name="Copenhaver G.P."/>
            <person name="Preuss D."/>
            <person name="Nierman W.C."/>
            <person name="White O."/>
            <person name="Eisen J.A."/>
            <person name="Salzberg S.L."/>
            <person name="Fraser C.M."/>
            <person name="Venter J.C."/>
        </authorList>
    </citation>
    <scope>NUCLEOTIDE SEQUENCE [LARGE SCALE GENOMIC DNA]</scope>
    <source>
        <strain>cv. Columbia</strain>
    </source>
</reference>
<reference key="2">
    <citation type="journal article" date="2017" name="Plant J.">
        <title>Araport11: a complete reannotation of the Arabidopsis thaliana reference genome.</title>
        <authorList>
            <person name="Cheng C.Y."/>
            <person name="Krishnakumar V."/>
            <person name="Chan A.P."/>
            <person name="Thibaud-Nissen F."/>
            <person name="Schobel S."/>
            <person name="Town C.D."/>
        </authorList>
    </citation>
    <scope>GENOME REANNOTATION</scope>
    <source>
        <strain>cv. Columbia</strain>
    </source>
</reference>
<reference key="3">
    <citation type="submission" date="2006-08" db="EMBL/GenBank/DDBJ databases">
        <title>Arabidopsis ORF Clones.</title>
        <authorList>
            <person name="Quinitio C."/>
            <person name="Chen H."/>
            <person name="Kim C.J."/>
            <person name="Shinn P."/>
            <person name="Ecker J.R."/>
        </authorList>
    </citation>
    <scope>NUCLEOTIDE SEQUENCE [LARGE SCALE MRNA]</scope>
    <source>
        <strain>cv. Columbia</strain>
    </source>
</reference>
<reference key="4">
    <citation type="submission" date="2002-03" db="EMBL/GenBank/DDBJ databases">
        <title>Full-length cDNA from Arabidopsis thaliana.</title>
        <authorList>
            <person name="Brover V.V."/>
            <person name="Troukhan M.E."/>
            <person name="Alexandrov N.A."/>
            <person name="Lu Y.-P."/>
            <person name="Flavell R.B."/>
            <person name="Feldmann K.A."/>
        </authorList>
    </citation>
    <scope>NUCLEOTIDE SEQUENCE [LARGE SCALE MRNA]</scope>
</reference>
<reference key="5">
    <citation type="journal article" date="2001" name="J. Biol. Chem.">
        <title>Phylogenetic analysis of the UDP-glycosyltransferase multigene family of Arabidopsis thaliana.</title>
        <authorList>
            <person name="Li Y."/>
            <person name="Baldauf S."/>
            <person name="Lim E.K."/>
            <person name="Bowles D.J."/>
        </authorList>
    </citation>
    <scope>GENE FAMILY</scope>
</reference>